<comment type="function">
    <text evidence="1">Inhibits the inactivation of voltage-gated sodium channels (Nav).</text>
</comment>
<comment type="subcellular location">
    <subcellularLocation>
        <location evidence="2">Secreted</location>
    </subcellularLocation>
</comment>
<comment type="tissue specificity">
    <text evidence="2">Expressed by the venom gland.</text>
</comment>
<comment type="domain">
    <text evidence="3">The presence of a 'disulfide through disulfide knot' structurally defines this protein as a knottin.</text>
</comment>
<comment type="mass spectrometry"/>
<comment type="similarity">
    <text evidence="3">Belongs to the neurotoxin 03 (Tx2) family. 06 subfamily.</text>
</comment>
<dbReference type="SMR" id="P84028"/>
<dbReference type="ArachnoServer" id="AS000016">
    <property type="toxin name" value="delta-ctenitoxin-Asp2e"/>
</dbReference>
<dbReference type="GO" id="GO:0005576">
    <property type="term" value="C:extracellular region"/>
    <property type="evidence" value="ECO:0007669"/>
    <property type="project" value="UniProtKB-SubCell"/>
</dbReference>
<dbReference type="GO" id="GO:0017080">
    <property type="term" value="F:sodium channel regulator activity"/>
    <property type="evidence" value="ECO:0007669"/>
    <property type="project" value="UniProtKB-KW"/>
</dbReference>
<dbReference type="GO" id="GO:0090729">
    <property type="term" value="F:toxin activity"/>
    <property type="evidence" value="ECO:0007669"/>
    <property type="project" value="UniProtKB-KW"/>
</dbReference>
<dbReference type="InterPro" id="IPR035285">
    <property type="entry name" value="CNTX"/>
</dbReference>
<dbReference type="Pfam" id="PF17492">
    <property type="entry name" value="D_CNTX"/>
    <property type="match status" value="1"/>
</dbReference>
<protein>
    <recommendedName>
        <fullName>Delta-ctenitoxin-Asp2e</fullName>
        <shortName>Delta-CNTX-Asp2e</shortName>
    </recommendedName>
    <alternativeName>
        <fullName>Neurotoxin ANC45C1</fullName>
    </alternativeName>
</protein>
<reference evidence="3" key="1">
    <citation type="submission" date="2004-06" db="UniProtKB">
        <title>Protein ANC45C1 from venom of South American fishing spider (Ancylometes spp.) has sequence similarities to Na channel antagonists from venoms of Phoneutria spiders.</title>
        <authorList>
            <person name="Richardson M."/>
            <person name="Pimenta A.M.C."/>
            <person name="Bemquerer M.P."/>
            <person name="Santoro M.M."/>
            <person name="Figueiredo S.G."/>
            <person name="Cordeiro M.N."/>
        </authorList>
    </citation>
    <scope>PROTEIN SEQUENCE</scope>
    <scope>SUBCELLULAR LOCATION</scope>
    <scope>TISSUE SPECIFICITY</scope>
    <scope>MASS SPECTROMETRY</scope>
    <source>
        <tissue>Venom</tissue>
    </source>
</reference>
<keyword id="KW-0903">Direct protein sequencing</keyword>
<keyword id="KW-1015">Disulfide bond</keyword>
<keyword id="KW-0872">Ion channel impairing toxin</keyword>
<keyword id="KW-0960">Knottin</keyword>
<keyword id="KW-0528">Neurotoxin</keyword>
<keyword id="KW-0964">Secreted</keyword>
<keyword id="KW-0800">Toxin</keyword>
<keyword id="KW-0738">Voltage-gated sodium channel impairing toxin</keyword>
<sequence>ATCAGQDKPCKVNCDCCGERGECVCGGPCICRQGNVFIAWSKLMTCK</sequence>
<organism>
    <name type="scientific">Ancylometes sp.</name>
    <name type="common">South American fishing spider</name>
    <dbReference type="NCBI Taxonomy" id="280265"/>
    <lineage>
        <taxon>Eukaryota</taxon>
        <taxon>Metazoa</taxon>
        <taxon>Ecdysozoa</taxon>
        <taxon>Arthropoda</taxon>
        <taxon>Chelicerata</taxon>
        <taxon>Arachnida</taxon>
        <taxon>Araneae</taxon>
        <taxon>Araneomorphae</taxon>
        <taxon>Entelegynae</taxon>
        <taxon>Lycosoidea</taxon>
        <taxon>Ctenidae</taxon>
        <taxon>Ancylometes</taxon>
    </lineage>
</organism>
<name>TX36A_ANCSP</name>
<proteinExistence type="evidence at protein level"/>
<accession>P84028</accession>
<evidence type="ECO:0000250" key="1"/>
<evidence type="ECO:0000269" key="2">
    <source ref="1"/>
</evidence>
<evidence type="ECO:0000305" key="3"/>
<feature type="chain" id="PRO_0000087631" description="Delta-ctenitoxin-Asp2e">
    <location>
        <begin position="1"/>
        <end position="47"/>
    </location>
</feature>
<feature type="disulfide bond" evidence="3">
    <location>
        <begin position="3"/>
        <end position="17"/>
    </location>
</feature>
<feature type="disulfide bond" evidence="3">
    <location>
        <begin position="10"/>
        <end position="23"/>
    </location>
</feature>
<feature type="disulfide bond" evidence="3">
    <location>
        <begin position="14"/>
        <end position="46"/>
    </location>
</feature>
<feature type="disulfide bond" evidence="3">
    <location>
        <begin position="16"/>
        <end position="31"/>
    </location>
</feature>
<feature type="disulfide bond" evidence="3">
    <location>
        <begin position="25"/>
        <end position="29"/>
    </location>
</feature>